<comment type="function">
    <text evidence="1">DNA ligase that catalyzes the formation of phosphodiester linkages between 5'-phosphoryl and 3'-hydroxyl groups in double-stranded DNA using NAD as a coenzyme and as the energy source for the reaction. It is essential for DNA replication and repair of damaged DNA.</text>
</comment>
<comment type="catalytic activity">
    <reaction evidence="1">
        <text>NAD(+) + (deoxyribonucleotide)n-3'-hydroxyl + 5'-phospho-(deoxyribonucleotide)m = (deoxyribonucleotide)n+m + AMP + beta-nicotinamide D-nucleotide.</text>
        <dbReference type="EC" id="6.5.1.2"/>
    </reaction>
</comment>
<comment type="cofactor">
    <cofactor evidence="1">
        <name>Mg(2+)</name>
        <dbReference type="ChEBI" id="CHEBI:18420"/>
    </cofactor>
    <cofactor evidence="1">
        <name>Mn(2+)</name>
        <dbReference type="ChEBI" id="CHEBI:29035"/>
    </cofactor>
</comment>
<comment type="similarity">
    <text evidence="1">Belongs to the NAD-dependent DNA ligase family. LigA subfamily.</text>
</comment>
<comment type="sequence caution" evidence="2">
    <conflict type="erroneous initiation">
        <sequence resource="EMBL-CDS" id="CAP01965"/>
    </conflict>
</comment>
<accession>B0VU02</accession>
<organism>
    <name type="scientific">Acinetobacter baumannii (strain SDF)</name>
    <dbReference type="NCBI Taxonomy" id="509170"/>
    <lineage>
        <taxon>Bacteria</taxon>
        <taxon>Pseudomonadati</taxon>
        <taxon>Pseudomonadota</taxon>
        <taxon>Gammaproteobacteria</taxon>
        <taxon>Moraxellales</taxon>
        <taxon>Moraxellaceae</taxon>
        <taxon>Acinetobacter</taxon>
        <taxon>Acinetobacter calcoaceticus/baumannii complex</taxon>
    </lineage>
</organism>
<protein>
    <recommendedName>
        <fullName evidence="1">DNA ligase</fullName>
        <ecNumber evidence="1">6.5.1.2</ecNumber>
    </recommendedName>
    <alternativeName>
        <fullName evidence="1">Polydeoxyribonucleotide synthase [NAD(+)]</fullName>
    </alternativeName>
</protein>
<reference key="1">
    <citation type="journal article" date="2008" name="PLoS ONE">
        <title>Comparative analysis of Acinetobacters: three genomes for three lifestyles.</title>
        <authorList>
            <person name="Vallenet D."/>
            <person name="Nordmann P."/>
            <person name="Barbe V."/>
            <person name="Poirel L."/>
            <person name="Mangenot S."/>
            <person name="Bataille E."/>
            <person name="Dossat C."/>
            <person name="Gas S."/>
            <person name="Kreimeyer A."/>
            <person name="Lenoble P."/>
            <person name="Oztas S."/>
            <person name="Poulain J."/>
            <person name="Segurens B."/>
            <person name="Robert C."/>
            <person name="Abergel C."/>
            <person name="Claverie J.-M."/>
            <person name="Raoult D."/>
            <person name="Medigue C."/>
            <person name="Weissenbach J."/>
            <person name="Cruveiller S."/>
        </authorList>
    </citation>
    <scope>NUCLEOTIDE SEQUENCE [LARGE SCALE GENOMIC DNA]</scope>
    <source>
        <strain>SDF</strain>
    </source>
</reference>
<gene>
    <name evidence="1" type="primary">ligA</name>
    <name type="ordered locus">ABSDF2659</name>
</gene>
<evidence type="ECO:0000255" key="1">
    <source>
        <dbReference type="HAMAP-Rule" id="MF_01588"/>
    </source>
</evidence>
<evidence type="ECO:0000305" key="2"/>
<feature type="chain" id="PRO_0000380277" description="DNA ligase">
    <location>
        <begin position="1"/>
        <end position="678"/>
    </location>
</feature>
<feature type="domain" description="BRCT" evidence="1">
    <location>
        <begin position="594"/>
        <end position="678"/>
    </location>
</feature>
<feature type="active site" description="N6-AMP-lysine intermediate" evidence="1">
    <location>
        <position position="116"/>
    </location>
</feature>
<feature type="binding site" evidence="1">
    <location>
        <begin position="34"/>
        <end position="38"/>
    </location>
    <ligand>
        <name>NAD(+)</name>
        <dbReference type="ChEBI" id="CHEBI:57540"/>
    </ligand>
</feature>
<feature type="binding site" evidence="1">
    <location>
        <begin position="83"/>
        <end position="84"/>
    </location>
    <ligand>
        <name>NAD(+)</name>
        <dbReference type="ChEBI" id="CHEBI:57540"/>
    </ligand>
</feature>
<feature type="binding site" evidence="1">
    <location>
        <position position="114"/>
    </location>
    <ligand>
        <name>NAD(+)</name>
        <dbReference type="ChEBI" id="CHEBI:57540"/>
    </ligand>
</feature>
<feature type="binding site" evidence="1">
    <location>
        <position position="137"/>
    </location>
    <ligand>
        <name>NAD(+)</name>
        <dbReference type="ChEBI" id="CHEBI:57540"/>
    </ligand>
</feature>
<feature type="binding site" evidence="1">
    <location>
        <position position="176"/>
    </location>
    <ligand>
        <name>NAD(+)</name>
        <dbReference type="ChEBI" id="CHEBI:57540"/>
    </ligand>
</feature>
<feature type="binding site" evidence="1">
    <location>
        <position position="293"/>
    </location>
    <ligand>
        <name>NAD(+)</name>
        <dbReference type="ChEBI" id="CHEBI:57540"/>
    </ligand>
</feature>
<feature type="binding site" evidence="1">
    <location>
        <position position="317"/>
    </location>
    <ligand>
        <name>NAD(+)</name>
        <dbReference type="ChEBI" id="CHEBI:57540"/>
    </ligand>
</feature>
<feature type="binding site" evidence="1">
    <location>
        <position position="411"/>
    </location>
    <ligand>
        <name>Zn(2+)</name>
        <dbReference type="ChEBI" id="CHEBI:29105"/>
    </ligand>
</feature>
<feature type="binding site" evidence="1">
    <location>
        <position position="414"/>
    </location>
    <ligand>
        <name>Zn(2+)</name>
        <dbReference type="ChEBI" id="CHEBI:29105"/>
    </ligand>
</feature>
<feature type="binding site" evidence="1">
    <location>
        <position position="429"/>
    </location>
    <ligand>
        <name>Zn(2+)</name>
        <dbReference type="ChEBI" id="CHEBI:29105"/>
    </ligand>
</feature>
<feature type="binding site" evidence="1">
    <location>
        <position position="435"/>
    </location>
    <ligand>
        <name>Zn(2+)</name>
        <dbReference type="ChEBI" id="CHEBI:29105"/>
    </ligand>
</feature>
<dbReference type="EC" id="6.5.1.2" evidence="1"/>
<dbReference type="EMBL" id="CU468230">
    <property type="protein sequence ID" value="CAP01965.1"/>
    <property type="status" value="ALT_INIT"/>
    <property type="molecule type" value="Genomic_DNA"/>
</dbReference>
<dbReference type="SMR" id="B0VU02"/>
<dbReference type="KEGG" id="abm:ABSDF2659"/>
<dbReference type="HOGENOM" id="CLU_007764_2_1_6"/>
<dbReference type="Proteomes" id="UP000001741">
    <property type="component" value="Chromosome"/>
</dbReference>
<dbReference type="GO" id="GO:0005829">
    <property type="term" value="C:cytosol"/>
    <property type="evidence" value="ECO:0007669"/>
    <property type="project" value="TreeGrafter"/>
</dbReference>
<dbReference type="GO" id="GO:0003677">
    <property type="term" value="F:DNA binding"/>
    <property type="evidence" value="ECO:0007669"/>
    <property type="project" value="InterPro"/>
</dbReference>
<dbReference type="GO" id="GO:0003911">
    <property type="term" value="F:DNA ligase (NAD+) activity"/>
    <property type="evidence" value="ECO:0007669"/>
    <property type="project" value="UniProtKB-UniRule"/>
</dbReference>
<dbReference type="GO" id="GO:0046872">
    <property type="term" value="F:metal ion binding"/>
    <property type="evidence" value="ECO:0007669"/>
    <property type="project" value="UniProtKB-KW"/>
</dbReference>
<dbReference type="GO" id="GO:0006281">
    <property type="term" value="P:DNA repair"/>
    <property type="evidence" value="ECO:0007669"/>
    <property type="project" value="UniProtKB-KW"/>
</dbReference>
<dbReference type="GO" id="GO:0006260">
    <property type="term" value="P:DNA replication"/>
    <property type="evidence" value="ECO:0007669"/>
    <property type="project" value="UniProtKB-KW"/>
</dbReference>
<dbReference type="CDD" id="cd17748">
    <property type="entry name" value="BRCT_DNA_ligase_like"/>
    <property type="match status" value="1"/>
</dbReference>
<dbReference type="CDD" id="cd00114">
    <property type="entry name" value="LIGANc"/>
    <property type="match status" value="1"/>
</dbReference>
<dbReference type="FunFam" id="1.10.150.20:FF:000006">
    <property type="entry name" value="DNA ligase"/>
    <property type="match status" value="1"/>
</dbReference>
<dbReference type="FunFam" id="1.10.150.20:FF:000007">
    <property type="entry name" value="DNA ligase"/>
    <property type="match status" value="1"/>
</dbReference>
<dbReference type="FunFam" id="1.10.287.610:FF:000002">
    <property type="entry name" value="DNA ligase"/>
    <property type="match status" value="1"/>
</dbReference>
<dbReference type="FunFam" id="2.40.50.140:FF:000012">
    <property type="entry name" value="DNA ligase"/>
    <property type="match status" value="1"/>
</dbReference>
<dbReference type="FunFam" id="3.30.470.30:FF:000001">
    <property type="entry name" value="DNA ligase"/>
    <property type="match status" value="1"/>
</dbReference>
<dbReference type="Gene3D" id="6.20.10.30">
    <property type="match status" value="1"/>
</dbReference>
<dbReference type="Gene3D" id="1.10.150.20">
    <property type="entry name" value="5' to 3' exonuclease, C-terminal subdomain"/>
    <property type="match status" value="2"/>
</dbReference>
<dbReference type="Gene3D" id="3.40.50.10190">
    <property type="entry name" value="BRCT domain"/>
    <property type="match status" value="1"/>
</dbReference>
<dbReference type="Gene3D" id="3.30.470.30">
    <property type="entry name" value="DNA ligase/mRNA capping enzyme"/>
    <property type="match status" value="1"/>
</dbReference>
<dbReference type="Gene3D" id="1.10.287.610">
    <property type="entry name" value="Helix hairpin bin"/>
    <property type="match status" value="1"/>
</dbReference>
<dbReference type="Gene3D" id="2.40.50.140">
    <property type="entry name" value="Nucleic acid-binding proteins"/>
    <property type="match status" value="1"/>
</dbReference>
<dbReference type="HAMAP" id="MF_01588">
    <property type="entry name" value="DNA_ligase_A"/>
    <property type="match status" value="1"/>
</dbReference>
<dbReference type="InterPro" id="IPR001357">
    <property type="entry name" value="BRCT_dom"/>
</dbReference>
<dbReference type="InterPro" id="IPR036420">
    <property type="entry name" value="BRCT_dom_sf"/>
</dbReference>
<dbReference type="InterPro" id="IPR041663">
    <property type="entry name" value="DisA/LigA_HHH"/>
</dbReference>
<dbReference type="InterPro" id="IPR001679">
    <property type="entry name" value="DNA_ligase"/>
</dbReference>
<dbReference type="InterPro" id="IPR018239">
    <property type="entry name" value="DNA_ligase_AS"/>
</dbReference>
<dbReference type="InterPro" id="IPR033136">
    <property type="entry name" value="DNA_ligase_CS"/>
</dbReference>
<dbReference type="InterPro" id="IPR013839">
    <property type="entry name" value="DNAligase_adenylation"/>
</dbReference>
<dbReference type="InterPro" id="IPR013840">
    <property type="entry name" value="DNAligase_N"/>
</dbReference>
<dbReference type="InterPro" id="IPR003583">
    <property type="entry name" value="Hlx-hairpin-Hlx_DNA-bd_motif"/>
</dbReference>
<dbReference type="InterPro" id="IPR012340">
    <property type="entry name" value="NA-bd_OB-fold"/>
</dbReference>
<dbReference type="InterPro" id="IPR004150">
    <property type="entry name" value="NAD_DNA_ligase_OB"/>
</dbReference>
<dbReference type="InterPro" id="IPR010994">
    <property type="entry name" value="RuvA_2-like"/>
</dbReference>
<dbReference type="InterPro" id="IPR004149">
    <property type="entry name" value="Znf_DNAligase_C4"/>
</dbReference>
<dbReference type="NCBIfam" id="TIGR00575">
    <property type="entry name" value="dnlj"/>
    <property type="match status" value="1"/>
</dbReference>
<dbReference type="NCBIfam" id="NF005932">
    <property type="entry name" value="PRK07956.1"/>
    <property type="match status" value="1"/>
</dbReference>
<dbReference type="PANTHER" id="PTHR23389">
    <property type="entry name" value="CHROMOSOME TRANSMISSION FIDELITY FACTOR 18"/>
    <property type="match status" value="1"/>
</dbReference>
<dbReference type="PANTHER" id="PTHR23389:SF9">
    <property type="entry name" value="DNA LIGASE"/>
    <property type="match status" value="1"/>
</dbReference>
<dbReference type="Pfam" id="PF00533">
    <property type="entry name" value="BRCT"/>
    <property type="match status" value="1"/>
</dbReference>
<dbReference type="Pfam" id="PF01653">
    <property type="entry name" value="DNA_ligase_aden"/>
    <property type="match status" value="1"/>
</dbReference>
<dbReference type="Pfam" id="PF03120">
    <property type="entry name" value="DNA_ligase_OB"/>
    <property type="match status" value="1"/>
</dbReference>
<dbReference type="Pfam" id="PF03119">
    <property type="entry name" value="DNA_ligase_ZBD"/>
    <property type="match status" value="1"/>
</dbReference>
<dbReference type="Pfam" id="PF12826">
    <property type="entry name" value="HHH_2"/>
    <property type="match status" value="1"/>
</dbReference>
<dbReference type="Pfam" id="PF22745">
    <property type="entry name" value="Nlig-Ia"/>
    <property type="match status" value="1"/>
</dbReference>
<dbReference type="PIRSF" id="PIRSF001604">
    <property type="entry name" value="LigA"/>
    <property type="match status" value="1"/>
</dbReference>
<dbReference type="SMART" id="SM00292">
    <property type="entry name" value="BRCT"/>
    <property type="match status" value="1"/>
</dbReference>
<dbReference type="SMART" id="SM00278">
    <property type="entry name" value="HhH1"/>
    <property type="match status" value="4"/>
</dbReference>
<dbReference type="SMART" id="SM00532">
    <property type="entry name" value="LIGANc"/>
    <property type="match status" value="1"/>
</dbReference>
<dbReference type="SUPFAM" id="SSF52113">
    <property type="entry name" value="BRCT domain"/>
    <property type="match status" value="1"/>
</dbReference>
<dbReference type="SUPFAM" id="SSF56091">
    <property type="entry name" value="DNA ligase/mRNA capping enzyme, catalytic domain"/>
    <property type="match status" value="1"/>
</dbReference>
<dbReference type="SUPFAM" id="SSF50249">
    <property type="entry name" value="Nucleic acid-binding proteins"/>
    <property type="match status" value="1"/>
</dbReference>
<dbReference type="SUPFAM" id="SSF47781">
    <property type="entry name" value="RuvA domain 2-like"/>
    <property type="match status" value="1"/>
</dbReference>
<dbReference type="PROSITE" id="PS50172">
    <property type="entry name" value="BRCT"/>
    <property type="match status" value="1"/>
</dbReference>
<dbReference type="PROSITE" id="PS01055">
    <property type="entry name" value="DNA_LIGASE_N1"/>
    <property type="match status" value="1"/>
</dbReference>
<dbReference type="PROSITE" id="PS01056">
    <property type="entry name" value="DNA_LIGASE_N2"/>
    <property type="match status" value="1"/>
</dbReference>
<name>DNLJ_ACIBS</name>
<proteinExistence type="inferred from homology"/>
<sequence>MAITSVIEQMRQLIQLIAKHNHAYYVMDQPTISDSEYDHLFHQLKALEEQYPEFVQADSPTTKVGGQALSKFESVTHVVPMLSLGNVFNQEDLFAFARRVEERLPNQKVQYEVELKLDGLAISLWYENGVLVRGVTRGDGETGEDITQNVKTIRNLPKVLHSEKYEIPRLLEVRGEVLMPKSGFEKLNADQEAKGEKTFANPRNAAAGSLRQLDPNIAAARPLAFYAYGIAQCEPNHGLTTMHDSLQWLTELGFQIAERQYLCNSIQEVQQRYEQIQQERPNLQVEIDGMVVKVDDLKQQQQLGFLSREPRWATAYKFPAQAALTTVEQIDWQVGRTGTLTPVARLNPVFVGGVTVSNVTLHNIGEIHRLDVRIGDTVSVYRTGDVIPKVEKVWPEFRPAEAEVVHLPESCPVCASPVVMPEGEALARCSGGLYCAAQRIEAIRHFVSRKAMDIEGLGDRWVESLLRLDLLKDVADIYHLHEHRETLLGIEKMGEKSVQNLIDAIEASKKTTLARFIYALGIRGVGETTARMLANTFQTLEALKAANVEALKKTPDVGDITAEWIADFFLAPHNIEVLDRLIAAGIHWDAPTAPTRQPLNGESWVLTGTLEQMTRDQATQMLQALGARVSGSVSSKTKCVVAGEKAGSKLEKAAKLGIPVMNETDFLSLMAGYGQTLS</sequence>
<keyword id="KW-0227">DNA damage</keyword>
<keyword id="KW-0234">DNA repair</keyword>
<keyword id="KW-0235">DNA replication</keyword>
<keyword id="KW-0436">Ligase</keyword>
<keyword id="KW-0460">Magnesium</keyword>
<keyword id="KW-0464">Manganese</keyword>
<keyword id="KW-0479">Metal-binding</keyword>
<keyword id="KW-0520">NAD</keyword>
<keyword id="KW-0862">Zinc</keyword>